<organism>
    <name type="scientific">Acetobacter pasteurianus</name>
    <name type="common">Acetobacter turbidans</name>
    <dbReference type="NCBI Taxonomy" id="438"/>
    <lineage>
        <taxon>Bacteria</taxon>
        <taxon>Pseudomonadati</taxon>
        <taxon>Pseudomonadota</taxon>
        <taxon>Alphaproteobacteria</taxon>
        <taxon>Acetobacterales</taxon>
        <taxon>Acetobacteraceae</taxon>
        <taxon>Acetobacter</taxon>
    </lineage>
</organism>
<name>AMPN_ACEPA</name>
<comment type="function">
    <text evidence="1">Aminopeptidase N is involved in the degradation of intracellular peptides generated by protein breakdown during normal growth as well as in response to nutrient starvation.</text>
</comment>
<comment type="catalytic activity">
    <reaction>
        <text>Release of an N-terminal amino acid, Xaa-|-Yaa- from a peptide, amide or arylamide. Xaa is preferably Ala, but may be most amino acids including Pro (slow action). When a terminal hydrophobic residue is followed by a prolyl residue, the two may be released as an intact Xaa-Pro dipeptide.</text>
        <dbReference type="EC" id="3.4.11.2"/>
    </reaction>
</comment>
<comment type="cofactor">
    <cofactor evidence="1">
        <name>Zn(2+)</name>
        <dbReference type="ChEBI" id="CHEBI:29105"/>
    </cofactor>
    <text evidence="1">Binds 1 zinc ion per subunit.</text>
</comment>
<comment type="subcellular location">
    <subcellularLocation>
        <location evidence="1">Cytoplasm</location>
    </subcellularLocation>
</comment>
<comment type="similarity">
    <text evidence="3">Belongs to the peptidase M1 family.</text>
</comment>
<evidence type="ECO:0000250" key="1"/>
<evidence type="ECO:0000255" key="2">
    <source>
        <dbReference type="PROSITE-ProRule" id="PRU10095"/>
    </source>
</evidence>
<evidence type="ECO:0000305" key="3"/>
<reference key="1">
    <citation type="submission" date="1996-01" db="EMBL/GenBank/DDBJ databases">
        <title>Cloning and DNA sequence analysis of the 5' end of aminopeptidase N (pepN) from Acetobacter turbidans ATCC9325.</title>
        <authorList>
            <person name="Weber M."/>
        </authorList>
    </citation>
    <scope>NUCLEOTIDE SEQUENCE [GENOMIC DNA]</scope>
    <source>
        <strain>ATCC 9325 / NCTC 6249 / NRRL B-570</strain>
    </source>
</reference>
<dbReference type="EC" id="3.4.11.2"/>
<dbReference type="EMBL" id="X94692">
    <property type="protein sequence ID" value="CAA64355.1"/>
    <property type="molecule type" value="Genomic_DNA"/>
</dbReference>
<dbReference type="SMR" id="Q10736"/>
<dbReference type="MEROPS" id="M01.010"/>
<dbReference type="GO" id="GO:0005737">
    <property type="term" value="C:cytoplasm"/>
    <property type="evidence" value="ECO:0007669"/>
    <property type="project" value="UniProtKB-SubCell"/>
</dbReference>
<dbReference type="GO" id="GO:0005615">
    <property type="term" value="C:extracellular space"/>
    <property type="evidence" value="ECO:0007669"/>
    <property type="project" value="TreeGrafter"/>
</dbReference>
<dbReference type="GO" id="GO:0016020">
    <property type="term" value="C:membrane"/>
    <property type="evidence" value="ECO:0007669"/>
    <property type="project" value="TreeGrafter"/>
</dbReference>
<dbReference type="GO" id="GO:0016285">
    <property type="term" value="F:alanyl aminopeptidase activity"/>
    <property type="evidence" value="ECO:0007669"/>
    <property type="project" value="UniProtKB-EC"/>
</dbReference>
<dbReference type="GO" id="GO:0070006">
    <property type="term" value="F:metalloaminopeptidase activity"/>
    <property type="evidence" value="ECO:0007669"/>
    <property type="project" value="TreeGrafter"/>
</dbReference>
<dbReference type="GO" id="GO:0042277">
    <property type="term" value="F:peptide binding"/>
    <property type="evidence" value="ECO:0007669"/>
    <property type="project" value="TreeGrafter"/>
</dbReference>
<dbReference type="GO" id="GO:0008270">
    <property type="term" value="F:zinc ion binding"/>
    <property type="evidence" value="ECO:0007669"/>
    <property type="project" value="InterPro"/>
</dbReference>
<dbReference type="GO" id="GO:0043171">
    <property type="term" value="P:peptide catabolic process"/>
    <property type="evidence" value="ECO:0007669"/>
    <property type="project" value="TreeGrafter"/>
</dbReference>
<dbReference type="GO" id="GO:0006508">
    <property type="term" value="P:proteolysis"/>
    <property type="evidence" value="ECO:0007669"/>
    <property type="project" value="UniProtKB-KW"/>
</dbReference>
<dbReference type="CDD" id="cd09601">
    <property type="entry name" value="M1_APN-Q_like"/>
    <property type="match status" value="1"/>
</dbReference>
<dbReference type="Gene3D" id="1.10.390.10">
    <property type="entry name" value="Neutral Protease Domain 2"/>
    <property type="match status" value="1"/>
</dbReference>
<dbReference type="Gene3D" id="2.60.40.1730">
    <property type="entry name" value="tricorn interacting facor f3 domain"/>
    <property type="match status" value="1"/>
</dbReference>
<dbReference type="InterPro" id="IPR045357">
    <property type="entry name" value="Aminopeptidase_N-like_N"/>
</dbReference>
<dbReference type="InterPro" id="IPR042097">
    <property type="entry name" value="Aminopeptidase_N-like_N_sf"/>
</dbReference>
<dbReference type="InterPro" id="IPR034016">
    <property type="entry name" value="M1_APN-typ"/>
</dbReference>
<dbReference type="InterPro" id="IPR001930">
    <property type="entry name" value="Peptidase_M1"/>
</dbReference>
<dbReference type="InterPro" id="IPR050344">
    <property type="entry name" value="Peptidase_M1_aminopeptidases"/>
</dbReference>
<dbReference type="InterPro" id="IPR014782">
    <property type="entry name" value="Peptidase_M1_dom"/>
</dbReference>
<dbReference type="InterPro" id="IPR027268">
    <property type="entry name" value="Peptidase_M4/M1_CTD_sf"/>
</dbReference>
<dbReference type="PANTHER" id="PTHR11533">
    <property type="entry name" value="PROTEASE M1 ZINC METALLOPROTEASE"/>
    <property type="match status" value="1"/>
</dbReference>
<dbReference type="PANTHER" id="PTHR11533:SF174">
    <property type="entry name" value="PUROMYCIN-SENSITIVE AMINOPEPTIDASE-RELATED"/>
    <property type="match status" value="1"/>
</dbReference>
<dbReference type="Pfam" id="PF01433">
    <property type="entry name" value="Peptidase_M1"/>
    <property type="match status" value="1"/>
</dbReference>
<dbReference type="Pfam" id="PF17900">
    <property type="entry name" value="Peptidase_M1_N"/>
    <property type="match status" value="1"/>
</dbReference>
<dbReference type="PRINTS" id="PR00756">
    <property type="entry name" value="ALADIPTASE"/>
</dbReference>
<dbReference type="SUPFAM" id="SSF63737">
    <property type="entry name" value="Leukotriene A4 hydrolase N-terminal domain"/>
    <property type="match status" value="1"/>
</dbReference>
<dbReference type="SUPFAM" id="SSF55486">
    <property type="entry name" value="Metalloproteases ('zincins'), catalytic domain"/>
    <property type="match status" value="1"/>
</dbReference>
<dbReference type="PROSITE" id="PS00142">
    <property type="entry name" value="ZINC_PROTEASE"/>
    <property type="match status" value="1"/>
</dbReference>
<keyword id="KW-0031">Aminopeptidase</keyword>
<keyword id="KW-0963">Cytoplasm</keyword>
<keyword id="KW-0378">Hydrolase</keyword>
<keyword id="KW-0479">Metal-binding</keyword>
<keyword id="KW-0482">Metalloprotease</keyword>
<keyword id="KW-0645">Protease</keyword>
<keyword id="KW-0862">Zinc</keyword>
<protein>
    <recommendedName>
        <fullName>Aminopeptidase N</fullName>
        <ecNumber>3.4.11.2</ecNumber>
    </recommendedName>
    <alternativeName>
        <fullName>Alpha-aminoacylpeptide hydrolase</fullName>
    </alternativeName>
</protein>
<gene>
    <name type="primary">pepN</name>
</gene>
<sequence>MRRLLTLTTLLAGVPLAAPVCAEQVFSFQRAAGQLPKTVVPVSYGINISTDIDNLKLTGQETIQVDVRTPTEDVTLNQAGLHLAGAVLDNGVKATITQDDAAETATLHFPAKVSKGAHTLVITYSGPILKTPNGIYVDDYTAPSGETKRMLVTQFEVADARRMFPGWDEPAFKATFQLNVTLPKEAVAVSNMPVTQSTPEGTSQKRVSFATTPRMSTYLLALVAGDMKSVQGQADGTPLAVYAPSGLEEQGEYALHASEKILPYYNNYFGVKYPLPQMDMVAIPGNYQAGAMENWGLLTYIDNVLLFDPPNSTPRTRELIYEVVAHEMAHQWSGDLVTMGWWDNIWLNEGFASWM</sequence>
<accession>Q10736</accession>
<feature type="chain" id="PRO_0000095067" description="Aminopeptidase N">
    <location>
        <begin position="1"/>
        <end position="355" status="greater than"/>
    </location>
</feature>
<feature type="active site" description="Proton acceptor" evidence="2">
    <location>
        <position position="327"/>
    </location>
</feature>
<feature type="binding site" evidence="1">
    <location>
        <position position="156"/>
    </location>
    <ligand>
        <name>substrate</name>
    </ligand>
</feature>
<feature type="binding site" evidence="1">
    <location>
        <begin position="290"/>
        <end position="294"/>
    </location>
    <ligand>
        <name>substrate</name>
    </ligand>
</feature>
<feature type="binding site" evidence="2">
    <location>
        <position position="326"/>
    </location>
    <ligand>
        <name>Zn(2+)</name>
        <dbReference type="ChEBI" id="CHEBI:29105"/>
        <note>catalytic</note>
    </ligand>
</feature>
<feature type="binding site" evidence="2">
    <location>
        <position position="330"/>
    </location>
    <ligand>
        <name>Zn(2+)</name>
        <dbReference type="ChEBI" id="CHEBI:29105"/>
        <note>catalytic</note>
    </ligand>
</feature>
<feature type="binding site" evidence="1">
    <location>
        <position position="349"/>
    </location>
    <ligand>
        <name>substrate</name>
    </ligand>
</feature>
<feature type="binding site" evidence="2">
    <location>
        <position position="349"/>
    </location>
    <ligand>
        <name>Zn(2+)</name>
        <dbReference type="ChEBI" id="CHEBI:29105"/>
        <note>catalytic</note>
    </ligand>
</feature>
<feature type="non-terminal residue">
    <location>
        <position position="355"/>
    </location>
</feature>
<proteinExistence type="inferred from homology"/>